<proteinExistence type="inferred from homology"/>
<gene>
    <name evidence="1" type="primary">argR</name>
    <name type="ordered locus">HSM_1540</name>
</gene>
<accession>B0UUR7</accession>
<keyword id="KW-0028">Amino-acid biosynthesis</keyword>
<keyword id="KW-0055">Arginine biosynthesis</keyword>
<keyword id="KW-0963">Cytoplasm</keyword>
<keyword id="KW-0238">DNA-binding</keyword>
<keyword id="KW-0678">Repressor</keyword>
<keyword id="KW-0804">Transcription</keyword>
<keyword id="KW-0805">Transcription regulation</keyword>
<sequence length="155" mass="16867">MINEKADSLVNAFKELLSQESFGSQSEIVSALQQMGFTHVNQSKVSRMLTKFGAVRTRNTRMEMVYCLPNELSVPNTGSPLKNLVLDVDHNETLIVIKTSPGAAQLIARLLDSVGKSEGILGTIAGDDTIFVTPTTGNDIQILITNIQKLFESSL</sequence>
<comment type="function">
    <text evidence="1">Regulates arginine biosynthesis genes.</text>
</comment>
<comment type="pathway">
    <text>Amino-acid biosynthesis; L-arginine biosynthesis [regulation].</text>
</comment>
<comment type="subcellular location">
    <subcellularLocation>
        <location evidence="1">Cytoplasm</location>
    </subcellularLocation>
</comment>
<comment type="similarity">
    <text evidence="1">Belongs to the ArgR family.</text>
</comment>
<feature type="chain" id="PRO_1000077127" description="Arginine repressor">
    <location>
        <begin position="1"/>
        <end position="155"/>
    </location>
</feature>
<dbReference type="EMBL" id="CP000947">
    <property type="protein sequence ID" value="ACA31297.1"/>
    <property type="molecule type" value="Genomic_DNA"/>
</dbReference>
<dbReference type="RefSeq" id="WP_012340680.1">
    <property type="nucleotide sequence ID" value="NC_010519.1"/>
</dbReference>
<dbReference type="SMR" id="B0UUR7"/>
<dbReference type="STRING" id="228400.HSM_1540"/>
<dbReference type="GeneID" id="31487843"/>
<dbReference type="KEGG" id="hsm:HSM_1540"/>
<dbReference type="HOGENOM" id="CLU_097103_2_0_6"/>
<dbReference type="UniPathway" id="UPA00068"/>
<dbReference type="GO" id="GO:0005737">
    <property type="term" value="C:cytoplasm"/>
    <property type="evidence" value="ECO:0007669"/>
    <property type="project" value="UniProtKB-SubCell"/>
</dbReference>
<dbReference type="GO" id="GO:0034618">
    <property type="term" value="F:arginine binding"/>
    <property type="evidence" value="ECO:0007669"/>
    <property type="project" value="InterPro"/>
</dbReference>
<dbReference type="GO" id="GO:0003677">
    <property type="term" value="F:DNA binding"/>
    <property type="evidence" value="ECO:0007669"/>
    <property type="project" value="UniProtKB-KW"/>
</dbReference>
<dbReference type="GO" id="GO:0003700">
    <property type="term" value="F:DNA-binding transcription factor activity"/>
    <property type="evidence" value="ECO:0007669"/>
    <property type="project" value="UniProtKB-UniRule"/>
</dbReference>
<dbReference type="GO" id="GO:0006526">
    <property type="term" value="P:L-arginine biosynthetic process"/>
    <property type="evidence" value="ECO:0007669"/>
    <property type="project" value="UniProtKB-UniPathway"/>
</dbReference>
<dbReference type="GO" id="GO:0051259">
    <property type="term" value="P:protein complex oligomerization"/>
    <property type="evidence" value="ECO:0007669"/>
    <property type="project" value="InterPro"/>
</dbReference>
<dbReference type="GO" id="GO:1900079">
    <property type="term" value="P:regulation of arginine biosynthetic process"/>
    <property type="evidence" value="ECO:0007669"/>
    <property type="project" value="UniProtKB-UniRule"/>
</dbReference>
<dbReference type="Gene3D" id="3.30.1360.40">
    <property type="match status" value="1"/>
</dbReference>
<dbReference type="Gene3D" id="1.10.10.10">
    <property type="entry name" value="Winged helix-like DNA-binding domain superfamily/Winged helix DNA-binding domain"/>
    <property type="match status" value="1"/>
</dbReference>
<dbReference type="HAMAP" id="MF_00173">
    <property type="entry name" value="Arg_repressor"/>
    <property type="match status" value="1"/>
</dbReference>
<dbReference type="InterPro" id="IPR001669">
    <property type="entry name" value="Arg_repress"/>
</dbReference>
<dbReference type="InterPro" id="IPR020899">
    <property type="entry name" value="Arg_repress_C"/>
</dbReference>
<dbReference type="InterPro" id="IPR036251">
    <property type="entry name" value="Arg_repress_C_sf"/>
</dbReference>
<dbReference type="InterPro" id="IPR020900">
    <property type="entry name" value="Arg_repress_DNA-bd"/>
</dbReference>
<dbReference type="InterPro" id="IPR036388">
    <property type="entry name" value="WH-like_DNA-bd_sf"/>
</dbReference>
<dbReference type="InterPro" id="IPR036390">
    <property type="entry name" value="WH_DNA-bd_sf"/>
</dbReference>
<dbReference type="NCBIfam" id="TIGR01529">
    <property type="entry name" value="argR_whole"/>
    <property type="match status" value="1"/>
</dbReference>
<dbReference type="NCBIfam" id="NF003457">
    <property type="entry name" value="PRK05066.1"/>
    <property type="match status" value="1"/>
</dbReference>
<dbReference type="PANTHER" id="PTHR34471">
    <property type="entry name" value="ARGININE REPRESSOR"/>
    <property type="match status" value="1"/>
</dbReference>
<dbReference type="PANTHER" id="PTHR34471:SF1">
    <property type="entry name" value="ARGININE REPRESSOR"/>
    <property type="match status" value="1"/>
</dbReference>
<dbReference type="Pfam" id="PF01316">
    <property type="entry name" value="Arg_repressor"/>
    <property type="match status" value="1"/>
</dbReference>
<dbReference type="Pfam" id="PF02863">
    <property type="entry name" value="Arg_repressor_C"/>
    <property type="match status" value="1"/>
</dbReference>
<dbReference type="PRINTS" id="PR01467">
    <property type="entry name" value="ARGREPRESSOR"/>
</dbReference>
<dbReference type="SUPFAM" id="SSF55252">
    <property type="entry name" value="C-terminal domain of arginine repressor"/>
    <property type="match status" value="1"/>
</dbReference>
<dbReference type="SUPFAM" id="SSF46785">
    <property type="entry name" value="Winged helix' DNA-binding domain"/>
    <property type="match status" value="1"/>
</dbReference>
<evidence type="ECO:0000255" key="1">
    <source>
        <dbReference type="HAMAP-Rule" id="MF_00173"/>
    </source>
</evidence>
<organism>
    <name type="scientific">Histophilus somni (strain 2336)</name>
    <name type="common">Haemophilus somnus</name>
    <dbReference type="NCBI Taxonomy" id="228400"/>
    <lineage>
        <taxon>Bacteria</taxon>
        <taxon>Pseudomonadati</taxon>
        <taxon>Pseudomonadota</taxon>
        <taxon>Gammaproteobacteria</taxon>
        <taxon>Pasteurellales</taxon>
        <taxon>Pasteurellaceae</taxon>
        <taxon>Histophilus</taxon>
    </lineage>
</organism>
<name>ARGR_HISS2</name>
<reference key="1">
    <citation type="submission" date="2008-02" db="EMBL/GenBank/DDBJ databases">
        <title>Complete sequence of Haemophilus somnus 2336.</title>
        <authorList>
            <consortium name="US DOE Joint Genome Institute"/>
            <person name="Siddaramappa S."/>
            <person name="Duncan A.J."/>
            <person name="Challacombe J.F."/>
            <person name="Rainey D."/>
            <person name="Gillaspy A.F."/>
            <person name="Carson M."/>
            <person name="Gipson J."/>
            <person name="Gipson M."/>
            <person name="Bruce D."/>
            <person name="Detter J.C."/>
            <person name="Han C.S."/>
            <person name="Land M."/>
            <person name="Tapia R."/>
            <person name="Thompson L.S."/>
            <person name="Orvis J."/>
            <person name="Zaitshik J."/>
            <person name="Barnes G."/>
            <person name="Brettin T.S."/>
            <person name="Dyer D.W."/>
            <person name="Inzana T.J."/>
        </authorList>
    </citation>
    <scope>NUCLEOTIDE SEQUENCE [LARGE SCALE GENOMIC DNA]</scope>
    <source>
        <strain>2336</strain>
    </source>
</reference>
<protein>
    <recommendedName>
        <fullName evidence="1">Arginine repressor</fullName>
    </recommendedName>
</protein>